<proteinExistence type="evidence at protein level"/>
<comment type="function">
    <text>Guanine nucleotide-binding proteins (G proteins) are involved as a modulator or transducer in various transmembrane signaling systems. The beta and gamma chains are required for the GTPase activity, for replacement of GDP by GTP, and for G protein-effector interaction.</text>
</comment>
<comment type="subunit">
    <text>G proteins are composed of 3 units, alpha, beta and gamma.</text>
</comment>
<comment type="subcellular location">
    <subcellularLocation>
        <location evidence="3">Cell membrane</location>
        <topology evidence="3">Lipid-anchor</topology>
        <orientation evidence="3">Cytoplasmic side</orientation>
    </subcellularLocation>
</comment>
<comment type="tissue specificity">
    <text>Retinal cones.</text>
</comment>
<comment type="similarity">
    <text evidence="3">Belongs to the G protein gamma family.</text>
</comment>
<organism>
    <name type="scientific">Homo sapiens</name>
    <name type="common">Human</name>
    <dbReference type="NCBI Taxonomy" id="9606"/>
    <lineage>
        <taxon>Eukaryota</taxon>
        <taxon>Metazoa</taxon>
        <taxon>Chordata</taxon>
        <taxon>Craniata</taxon>
        <taxon>Vertebrata</taxon>
        <taxon>Euteleostomi</taxon>
        <taxon>Mammalia</taxon>
        <taxon>Eutheria</taxon>
        <taxon>Euarchontoglires</taxon>
        <taxon>Primates</taxon>
        <taxon>Haplorrhini</taxon>
        <taxon>Catarrhini</taxon>
        <taxon>Hominidae</taxon>
        <taxon>Homo</taxon>
    </lineage>
</organism>
<feature type="chain" id="PRO_0000012645" description="Guanine nucleotide-binding protein G(I)/G(S)/G(O) subunit gamma-T2">
    <location>
        <begin position="1"/>
        <end position="66"/>
    </location>
</feature>
<feature type="propeptide" id="PRO_0000012646" description="Removed in mature form" evidence="1">
    <location>
        <begin position="67"/>
        <end position="69"/>
    </location>
</feature>
<feature type="modified residue" description="Cysteine methyl ester" evidence="2">
    <location>
        <position position="66"/>
    </location>
</feature>
<feature type="lipid moiety-binding region" description="S-farnesyl cysteine" evidence="1">
    <location>
        <position position="66"/>
    </location>
</feature>
<feature type="sequence variant" id="VAR_049271" description="In dbSNP:rs9895097.">
    <original>L</original>
    <variation>F</variation>
    <location>
        <position position="11"/>
    </location>
</feature>
<name>GBGT2_HUMAN</name>
<sequence length="69" mass="7747">MAQDLSEKDLLKMEVEQLKKEVKNTRIPISKAGKEIKEYVEAQAGNDPFLKGIPEDKNPFKEKGGCLIS</sequence>
<evidence type="ECO:0000250" key="1"/>
<evidence type="ECO:0000255" key="2"/>
<evidence type="ECO:0000305" key="3"/>
<accession>O14610</accession>
<accession>B2R746</accession>
<accession>D3DTW5</accession>
<keyword id="KW-1003">Cell membrane</keyword>
<keyword id="KW-0449">Lipoprotein</keyword>
<keyword id="KW-0472">Membrane</keyword>
<keyword id="KW-0488">Methylation</keyword>
<keyword id="KW-0636">Prenylation</keyword>
<keyword id="KW-1267">Proteomics identification</keyword>
<keyword id="KW-1185">Reference proteome</keyword>
<keyword id="KW-0807">Transducer</keyword>
<dbReference type="EMBL" id="AF001160">
    <property type="protein sequence ID" value="AAB70039.1"/>
    <property type="molecule type" value="Genomic_DNA"/>
</dbReference>
<dbReference type="EMBL" id="AF001159">
    <property type="protein sequence ID" value="AAB70039.1"/>
    <property type="status" value="JOINED"/>
    <property type="molecule type" value="Genomic_DNA"/>
</dbReference>
<dbReference type="EMBL" id="AF365870">
    <property type="protein sequence ID" value="AAK53384.1"/>
    <property type="molecule type" value="mRNA"/>
</dbReference>
<dbReference type="EMBL" id="AF493876">
    <property type="protein sequence ID" value="AAM12590.1"/>
    <property type="molecule type" value="mRNA"/>
</dbReference>
<dbReference type="EMBL" id="AK312839">
    <property type="protein sequence ID" value="BAG35693.1"/>
    <property type="molecule type" value="mRNA"/>
</dbReference>
<dbReference type="EMBL" id="CH471109">
    <property type="protein sequence ID" value="EAW94688.1"/>
    <property type="molecule type" value="Genomic_DNA"/>
</dbReference>
<dbReference type="EMBL" id="CH471109">
    <property type="protein sequence ID" value="EAW94689.1"/>
    <property type="molecule type" value="Genomic_DNA"/>
</dbReference>
<dbReference type="EMBL" id="BC008663">
    <property type="protein sequence ID" value="AAH08663.1"/>
    <property type="molecule type" value="mRNA"/>
</dbReference>
<dbReference type="CCDS" id="CCDS11545.1"/>
<dbReference type="RefSeq" id="NP_001185683.1">
    <property type="nucleotide sequence ID" value="NM_001198754.2"/>
</dbReference>
<dbReference type="RefSeq" id="NP_001185684.1">
    <property type="nucleotide sequence ID" value="NM_001198755.1"/>
</dbReference>
<dbReference type="RefSeq" id="NP_001185685.1">
    <property type="nucleotide sequence ID" value="NM_001198756.1"/>
</dbReference>
<dbReference type="RefSeq" id="NP_113686.1">
    <property type="nucleotide sequence ID" value="NM_031498.2"/>
</dbReference>
<dbReference type="SMR" id="O14610"/>
<dbReference type="BioGRID" id="109055">
    <property type="interactions" value="11"/>
</dbReference>
<dbReference type="CORUM" id="O14610"/>
<dbReference type="FunCoup" id="O14610">
    <property type="interactions" value="1021"/>
</dbReference>
<dbReference type="STRING" id="9606.ENSP00000421710"/>
<dbReference type="TCDB" id="8.A.92.1.1">
    <property type="family name" value="the g-protein AlphaBetaGama complex (gpc) family"/>
</dbReference>
<dbReference type="iPTMnet" id="O14610"/>
<dbReference type="PhosphoSitePlus" id="O14610"/>
<dbReference type="BioMuta" id="GNGT2"/>
<dbReference type="MassIVE" id="O14610"/>
<dbReference type="PaxDb" id="9606-ENSP00000426022"/>
<dbReference type="PeptideAtlas" id="O14610"/>
<dbReference type="ProteomicsDB" id="48115"/>
<dbReference type="Antibodypedia" id="30361">
    <property type="antibodies" value="93 antibodies from 22 providers"/>
</dbReference>
<dbReference type="DNASU" id="2793"/>
<dbReference type="Ensembl" id="ENST00000300406.6">
    <property type="protein sequence ID" value="ENSP00000300406.2"/>
    <property type="gene ID" value="ENSG00000167083.7"/>
</dbReference>
<dbReference type="Ensembl" id="ENST00000507680.6">
    <property type="protein sequence ID" value="ENSP00000421710.1"/>
    <property type="gene ID" value="ENSG00000167083.7"/>
</dbReference>
<dbReference type="Ensembl" id="ENST00000511277.5">
    <property type="protein sequence ID" value="ENSP00000426022.1"/>
    <property type="gene ID" value="ENSG00000167083.7"/>
</dbReference>
<dbReference type="Ensembl" id="ENST00000511673.1">
    <property type="protein sequence ID" value="ENSP00000422879.1"/>
    <property type="gene ID" value="ENSG00000167083.7"/>
</dbReference>
<dbReference type="Ensembl" id="ENST00000515635.5">
    <property type="protein sequence ID" value="ENSP00000423924.1"/>
    <property type="gene ID" value="ENSG00000167083.7"/>
</dbReference>
<dbReference type="GeneID" id="2793"/>
<dbReference type="KEGG" id="hsa:2793"/>
<dbReference type="MANE-Select" id="ENST00000507680.6">
    <property type="protein sequence ID" value="ENSP00000421710.1"/>
    <property type="RefSeq nucleotide sequence ID" value="NM_001198754.2"/>
    <property type="RefSeq protein sequence ID" value="NP_001185683.1"/>
</dbReference>
<dbReference type="UCSC" id="uc002ioo.3">
    <property type="organism name" value="human"/>
</dbReference>
<dbReference type="AGR" id="HGNC:4412"/>
<dbReference type="CTD" id="2793"/>
<dbReference type="DisGeNET" id="2793"/>
<dbReference type="GeneCards" id="GNGT2"/>
<dbReference type="HGNC" id="HGNC:4412">
    <property type="gene designation" value="GNGT2"/>
</dbReference>
<dbReference type="HPA" id="ENSG00000167083">
    <property type="expression patterns" value="Tissue enriched (retina)"/>
</dbReference>
<dbReference type="MIM" id="139391">
    <property type="type" value="gene"/>
</dbReference>
<dbReference type="neXtProt" id="NX_O14610"/>
<dbReference type="OpenTargets" id="ENSG00000167083"/>
<dbReference type="PharmGKB" id="PA28791"/>
<dbReference type="VEuPathDB" id="HostDB:ENSG00000167083"/>
<dbReference type="eggNOG" id="KOG4119">
    <property type="taxonomic scope" value="Eukaryota"/>
</dbReference>
<dbReference type="GeneTree" id="ENSGT01100000263525"/>
<dbReference type="HOGENOM" id="CLU_168377_2_1_1"/>
<dbReference type="InParanoid" id="O14610"/>
<dbReference type="OMA" id="SWLEIAW"/>
<dbReference type="OrthoDB" id="9933679at2759"/>
<dbReference type="PAN-GO" id="O14610">
    <property type="GO annotations" value="3 GO annotations based on evolutionary models"/>
</dbReference>
<dbReference type="PhylomeDB" id="O14610"/>
<dbReference type="TreeFam" id="TF319909"/>
<dbReference type="PathwayCommons" id="O14610"/>
<dbReference type="Reactome" id="R-HSA-1296041">
    <property type="pathway name" value="Activation of G protein gated Potassium channels"/>
</dbReference>
<dbReference type="Reactome" id="R-HSA-202040">
    <property type="pathway name" value="G-protein activation"/>
</dbReference>
<dbReference type="Reactome" id="R-HSA-381676">
    <property type="pathway name" value="Glucagon-like Peptide-1 (GLP1) regulates insulin secretion"/>
</dbReference>
<dbReference type="Reactome" id="R-HSA-392170">
    <property type="pathway name" value="ADP signalling through P2Y purinoceptor 12"/>
</dbReference>
<dbReference type="Reactome" id="R-HSA-392451">
    <property type="pathway name" value="G beta:gamma signalling through PI3Kgamma"/>
</dbReference>
<dbReference type="Reactome" id="R-HSA-392851">
    <property type="pathway name" value="Prostacyclin signalling through prostacyclin receptor"/>
</dbReference>
<dbReference type="Reactome" id="R-HSA-400042">
    <property type="pathway name" value="Adrenaline,noradrenaline inhibits insulin secretion"/>
</dbReference>
<dbReference type="Reactome" id="R-HSA-4086398">
    <property type="pathway name" value="Ca2+ pathway"/>
</dbReference>
<dbReference type="Reactome" id="R-HSA-416476">
    <property type="pathway name" value="G alpha (q) signalling events"/>
</dbReference>
<dbReference type="Reactome" id="R-HSA-416482">
    <property type="pathway name" value="G alpha (12/13) signalling events"/>
</dbReference>
<dbReference type="Reactome" id="R-HSA-418217">
    <property type="pathway name" value="G beta:gamma signalling through PLC beta"/>
</dbReference>
<dbReference type="Reactome" id="R-HSA-418555">
    <property type="pathway name" value="G alpha (s) signalling events"/>
</dbReference>
<dbReference type="Reactome" id="R-HSA-418592">
    <property type="pathway name" value="ADP signalling through P2Y purinoceptor 1"/>
</dbReference>
<dbReference type="Reactome" id="R-HSA-418594">
    <property type="pathway name" value="G alpha (i) signalling events"/>
</dbReference>
<dbReference type="Reactome" id="R-HSA-418597">
    <property type="pathway name" value="G alpha (z) signalling events"/>
</dbReference>
<dbReference type="Reactome" id="R-HSA-420092">
    <property type="pathway name" value="Glucagon-type ligand receptors"/>
</dbReference>
<dbReference type="Reactome" id="R-HSA-428930">
    <property type="pathway name" value="Thromboxane signalling through TP receptor"/>
</dbReference>
<dbReference type="Reactome" id="R-HSA-432040">
    <property type="pathway name" value="Vasopressin regulates renal water homeostasis via Aquaporins"/>
</dbReference>
<dbReference type="Reactome" id="R-HSA-456926">
    <property type="pathway name" value="Thrombin signalling through proteinase activated receptors (PARs)"/>
</dbReference>
<dbReference type="Reactome" id="R-HSA-500657">
    <property type="pathway name" value="Presynaptic function of Kainate receptors"/>
</dbReference>
<dbReference type="Reactome" id="R-HSA-6814122">
    <property type="pathway name" value="Cooperation of PDCL (PhLP1) and TRiC/CCT in G-protein beta folding"/>
</dbReference>
<dbReference type="Reactome" id="R-HSA-8964315">
    <property type="pathway name" value="G beta:gamma signalling through BTK"/>
</dbReference>
<dbReference type="Reactome" id="R-HSA-8964616">
    <property type="pathway name" value="G beta:gamma signalling through CDC42"/>
</dbReference>
<dbReference type="Reactome" id="R-HSA-9009391">
    <property type="pathway name" value="Extra-nuclear estrogen signaling"/>
</dbReference>
<dbReference type="Reactome" id="R-HSA-9634597">
    <property type="pathway name" value="GPER1 signaling"/>
</dbReference>
<dbReference type="Reactome" id="R-HSA-9660821">
    <property type="pathway name" value="ADORA2B mediated anti-inflammatory cytokines production"/>
</dbReference>
<dbReference type="Reactome" id="R-HSA-9856530">
    <property type="pathway name" value="High laminar flow shear stress activates signaling by PIEZO1 and PECAM1:CDH5:KDR in endothelial cells"/>
</dbReference>
<dbReference type="Reactome" id="R-HSA-997272">
    <property type="pathway name" value="Inhibition of voltage gated Ca2+ channels via Gbeta/gamma subunits"/>
</dbReference>
<dbReference type="SignaLink" id="O14610"/>
<dbReference type="BioGRID-ORCS" id="2793">
    <property type="hits" value="13 hits in 1145 CRISPR screens"/>
</dbReference>
<dbReference type="GeneWiki" id="GNGT2"/>
<dbReference type="GenomeRNAi" id="2793"/>
<dbReference type="Pharos" id="O14610">
    <property type="development level" value="Tbio"/>
</dbReference>
<dbReference type="PRO" id="PR:O14610"/>
<dbReference type="Proteomes" id="UP000005640">
    <property type="component" value="Chromosome 17"/>
</dbReference>
<dbReference type="RNAct" id="O14610">
    <property type="molecule type" value="protein"/>
</dbReference>
<dbReference type="Bgee" id="ENSG00000167083">
    <property type="expression patterns" value="Expressed in granulocyte and 117 other cell types or tissues"/>
</dbReference>
<dbReference type="ExpressionAtlas" id="O14610">
    <property type="expression patterns" value="baseline and differential"/>
</dbReference>
<dbReference type="GO" id="GO:0005834">
    <property type="term" value="C:heterotrimeric G-protein complex"/>
    <property type="evidence" value="ECO:0000314"/>
    <property type="project" value="MGI"/>
</dbReference>
<dbReference type="GO" id="GO:0031681">
    <property type="term" value="F:G-protein beta-subunit binding"/>
    <property type="evidence" value="ECO:0000318"/>
    <property type="project" value="GO_Central"/>
</dbReference>
<dbReference type="GO" id="GO:0003924">
    <property type="term" value="F:GTPase activity"/>
    <property type="evidence" value="ECO:0000314"/>
    <property type="project" value="MGI"/>
</dbReference>
<dbReference type="GO" id="GO:0007186">
    <property type="term" value="P:G protein-coupled receptor signaling pathway"/>
    <property type="evidence" value="ECO:0000318"/>
    <property type="project" value="GO_Central"/>
</dbReference>
<dbReference type="GO" id="GO:0007602">
    <property type="term" value="P:phototransduction"/>
    <property type="evidence" value="ECO:0000303"/>
    <property type="project" value="UniProtKB"/>
</dbReference>
<dbReference type="CDD" id="cd00068">
    <property type="entry name" value="GGL"/>
    <property type="match status" value="1"/>
</dbReference>
<dbReference type="FunFam" id="4.10.260.10:FF:000001">
    <property type="entry name" value="Guanine nucleotide-binding protein subunit gamma"/>
    <property type="match status" value="1"/>
</dbReference>
<dbReference type="Gene3D" id="4.10.260.10">
    <property type="entry name" value="Transducin (heterotrimeric G protein), gamma chain"/>
    <property type="match status" value="1"/>
</dbReference>
<dbReference type="InterPro" id="IPR015898">
    <property type="entry name" value="G-protein_gamma-like_dom"/>
</dbReference>
<dbReference type="InterPro" id="IPR036284">
    <property type="entry name" value="GGL_sf"/>
</dbReference>
<dbReference type="InterPro" id="IPR001770">
    <property type="entry name" value="Gprotein-gamma"/>
</dbReference>
<dbReference type="PANTHER" id="PTHR13809">
    <property type="entry name" value="GUANINE NUCLEOTIDE-BINDING PROTEIN GAMMA SUBUNIT"/>
    <property type="match status" value="1"/>
</dbReference>
<dbReference type="Pfam" id="PF00631">
    <property type="entry name" value="G-gamma"/>
    <property type="match status" value="1"/>
</dbReference>
<dbReference type="PRINTS" id="PR00321">
    <property type="entry name" value="GPROTEING"/>
</dbReference>
<dbReference type="SMART" id="SM01224">
    <property type="entry name" value="G_gamma"/>
    <property type="match status" value="1"/>
</dbReference>
<dbReference type="SMART" id="SM00224">
    <property type="entry name" value="GGL"/>
    <property type="match status" value="1"/>
</dbReference>
<dbReference type="SUPFAM" id="SSF48670">
    <property type="entry name" value="Transducin (heterotrimeric G protein), gamma chain"/>
    <property type="match status" value="1"/>
</dbReference>
<dbReference type="PROSITE" id="PS50058">
    <property type="entry name" value="G_PROTEIN_GAMMA"/>
    <property type="match status" value="1"/>
</dbReference>
<protein>
    <recommendedName>
        <fullName>Guanine nucleotide-binding protein G(I)/G(S)/G(O) subunit gamma-T2</fullName>
    </recommendedName>
    <alternativeName>
        <fullName>G gamma-C</fullName>
    </alternativeName>
    <alternativeName>
        <fullName>G-gamma-8</fullName>
    </alternativeName>
    <alternativeName>
        <fullName>G-gamma-9</fullName>
    </alternativeName>
    <alternativeName>
        <fullName>Guanine nucleotide binding protein gamma transducing activity polypeptide 2</fullName>
    </alternativeName>
</protein>
<gene>
    <name type="primary">GNGT2</name>
    <name type="synonym">GNG8</name>
    <name type="synonym">GNG9</name>
    <name type="synonym">GNGT8</name>
</gene>
<reference key="1">
    <citation type="journal article" date="1997" name="Genomics">
        <title>Gene structure and chromosome localization of the G gamma c subunit of human cone G-protein (GNGT2).</title>
        <authorList>
            <person name="Ong O.C."/>
            <person name="Hu K."/>
            <person name="Rong H."/>
            <person name="Lee R.H."/>
            <person name="Fung B.K.-K."/>
        </authorList>
    </citation>
    <scope>NUCLEOTIDE SEQUENCE [GENOMIC DNA]</scope>
    <source>
        <tissue>Retina</tissue>
    </source>
</reference>
<reference key="2">
    <citation type="journal article" date="2001" name="Protein Sci.">
        <title>Identification of a region in G protein gamma subunits conserved across species but hypervariable among subunit isoforms.</title>
        <authorList>
            <person name="Cook L.A."/>
            <person name="Schey K.L."/>
            <person name="Cleator J.H."/>
            <person name="Wilcox M.D."/>
            <person name="Dingus J."/>
            <person name="Hildebrandt J.D."/>
        </authorList>
    </citation>
    <scope>NUCLEOTIDE SEQUENCE [MRNA]</scope>
</reference>
<reference key="3">
    <citation type="submission" date="2002-03" db="EMBL/GenBank/DDBJ databases">
        <title>cDNA clones of human proteins involved in signal transduction sequenced by the Guthrie cDNA resource center (www.cdna.org).</title>
        <authorList>
            <person name="Puhl H.L. III"/>
            <person name="Ikeda S.R."/>
            <person name="Aronstam R.S."/>
        </authorList>
    </citation>
    <scope>NUCLEOTIDE SEQUENCE [LARGE SCALE MRNA]</scope>
</reference>
<reference key="4">
    <citation type="journal article" date="2004" name="Nat. Genet.">
        <title>Complete sequencing and characterization of 21,243 full-length human cDNAs.</title>
        <authorList>
            <person name="Ota T."/>
            <person name="Suzuki Y."/>
            <person name="Nishikawa T."/>
            <person name="Otsuki T."/>
            <person name="Sugiyama T."/>
            <person name="Irie R."/>
            <person name="Wakamatsu A."/>
            <person name="Hayashi K."/>
            <person name="Sato H."/>
            <person name="Nagai K."/>
            <person name="Kimura K."/>
            <person name="Makita H."/>
            <person name="Sekine M."/>
            <person name="Obayashi M."/>
            <person name="Nishi T."/>
            <person name="Shibahara T."/>
            <person name="Tanaka T."/>
            <person name="Ishii S."/>
            <person name="Yamamoto J."/>
            <person name="Saito K."/>
            <person name="Kawai Y."/>
            <person name="Isono Y."/>
            <person name="Nakamura Y."/>
            <person name="Nagahari K."/>
            <person name="Murakami K."/>
            <person name="Yasuda T."/>
            <person name="Iwayanagi T."/>
            <person name="Wagatsuma M."/>
            <person name="Shiratori A."/>
            <person name="Sudo H."/>
            <person name="Hosoiri T."/>
            <person name="Kaku Y."/>
            <person name="Kodaira H."/>
            <person name="Kondo H."/>
            <person name="Sugawara M."/>
            <person name="Takahashi M."/>
            <person name="Kanda K."/>
            <person name="Yokoi T."/>
            <person name="Furuya T."/>
            <person name="Kikkawa E."/>
            <person name="Omura Y."/>
            <person name="Abe K."/>
            <person name="Kamihara K."/>
            <person name="Katsuta N."/>
            <person name="Sato K."/>
            <person name="Tanikawa M."/>
            <person name="Yamazaki M."/>
            <person name="Ninomiya K."/>
            <person name="Ishibashi T."/>
            <person name="Yamashita H."/>
            <person name="Murakawa K."/>
            <person name="Fujimori K."/>
            <person name="Tanai H."/>
            <person name="Kimata M."/>
            <person name="Watanabe M."/>
            <person name="Hiraoka S."/>
            <person name="Chiba Y."/>
            <person name="Ishida S."/>
            <person name="Ono Y."/>
            <person name="Takiguchi S."/>
            <person name="Watanabe S."/>
            <person name="Yosida M."/>
            <person name="Hotuta T."/>
            <person name="Kusano J."/>
            <person name="Kanehori K."/>
            <person name="Takahashi-Fujii A."/>
            <person name="Hara H."/>
            <person name="Tanase T.-O."/>
            <person name="Nomura Y."/>
            <person name="Togiya S."/>
            <person name="Komai F."/>
            <person name="Hara R."/>
            <person name="Takeuchi K."/>
            <person name="Arita M."/>
            <person name="Imose N."/>
            <person name="Musashino K."/>
            <person name="Yuuki H."/>
            <person name="Oshima A."/>
            <person name="Sasaki N."/>
            <person name="Aotsuka S."/>
            <person name="Yoshikawa Y."/>
            <person name="Matsunawa H."/>
            <person name="Ichihara T."/>
            <person name="Shiohata N."/>
            <person name="Sano S."/>
            <person name="Moriya S."/>
            <person name="Momiyama H."/>
            <person name="Satoh N."/>
            <person name="Takami S."/>
            <person name="Terashima Y."/>
            <person name="Suzuki O."/>
            <person name="Nakagawa S."/>
            <person name="Senoh A."/>
            <person name="Mizoguchi H."/>
            <person name="Goto Y."/>
            <person name="Shimizu F."/>
            <person name="Wakebe H."/>
            <person name="Hishigaki H."/>
            <person name="Watanabe T."/>
            <person name="Sugiyama A."/>
            <person name="Takemoto M."/>
            <person name="Kawakami B."/>
            <person name="Yamazaki M."/>
            <person name="Watanabe K."/>
            <person name="Kumagai A."/>
            <person name="Itakura S."/>
            <person name="Fukuzumi Y."/>
            <person name="Fujimori Y."/>
            <person name="Komiyama M."/>
            <person name="Tashiro H."/>
            <person name="Tanigami A."/>
            <person name="Fujiwara T."/>
            <person name="Ono T."/>
            <person name="Yamada K."/>
            <person name="Fujii Y."/>
            <person name="Ozaki K."/>
            <person name="Hirao M."/>
            <person name="Ohmori Y."/>
            <person name="Kawabata A."/>
            <person name="Hikiji T."/>
            <person name="Kobatake N."/>
            <person name="Inagaki H."/>
            <person name="Ikema Y."/>
            <person name="Okamoto S."/>
            <person name="Okitani R."/>
            <person name="Kawakami T."/>
            <person name="Noguchi S."/>
            <person name="Itoh T."/>
            <person name="Shigeta K."/>
            <person name="Senba T."/>
            <person name="Matsumura K."/>
            <person name="Nakajima Y."/>
            <person name="Mizuno T."/>
            <person name="Morinaga M."/>
            <person name="Sasaki M."/>
            <person name="Togashi T."/>
            <person name="Oyama M."/>
            <person name="Hata H."/>
            <person name="Watanabe M."/>
            <person name="Komatsu T."/>
            <person name="Mizushima-Sugano J."/>
            <person name="Satoh T."/>
            <person name="Shirai Y."/>
            <person name="Takahashi Y."/>
            <person name="Nakagawa K."/>
            <person name="Okumura K."/>
            <person name="Nagase T."/>
            <person name="Nomura N."/>
            <person name="Kikuchi H."/>
            <person name="Masuho Y."/>
            <person name="Yamashita R."/>
            <person name="Nakai K."/>
            <person name="Yada T."/>
            <person name="Nakamura Y."/>
            <person name="Ohara O."/>
            <person name="Isogai T."/>
            <person name="Sugano S."/>
        </authorList>
    </citation>
    <scope>NUCLEOTIDE SEQUENCE [LARGE SCALE MRNA]</scope>
    <source>
        <tissue>Thymus</tissue>
    </source>
</reference>
<reference key="5">
    <citation type="submission" date="2005-09" db="EMBL/GenBank/DDBJ databases">
        <authorList>
            <person name="Mural R.J."/>
            <person name="Istrail S."/>
            <person name="Sutton G.G."/>
            <person name="Florea L."/>
            <person name="Halpern A.L."/>
            <person name="Mobarry C.M."/>
            <person name="Lippert R."/>
            <person name="Walenz B."/>
            <person name="Shatkay H."/>
            <person name="Dew I."/>
            <person name="Miller J.R."/>
            <person name="Flanigan M.J."/>
            <person name="Edwards N.J."/>
            <person name="Bolanos R."/>
            <person name="Fasulo D."/>
            <person name="Halldorsson B.V."/>
            <person name="Hannenhalli S."/>
            <person name="Turner R."/>
            <person name="Yooseph S."/>
            <person name="Lu F."/>
            <person name="Nusskern D.R."/>
            <person name="Shue B.C."/>
            <person name="Zheng X.H."/>
            <person name="Zhong F."/>
            <person name="Delcher A.L."/>
            <person name="Huson D.H."/>
            <person name="Kravitz S.A."/>
            <person name="Mouchard L."/>
            <person name="Reinert K."/>
            <person name="Remington K.A."/>
            <person name="Clark A.G."/>
            <person name="Waterman M.S."/>
            <person name="Eichler E.E."/>
            <person name="Adams M.D."/>
            <person name="Hunkapiller M.W."/>
            <person name="Myers E.W."/>
            <person name="Venter J.C."/>
        </authorList>
    </citation>
    <scope>NUCLEOTIDE SEQUENCE [LARGE SCALE GENOMIC DNA]</scope>
</reference>
<reference key="6">
    <citation type="journal article" date="2004" name="Genome Res.">
        <title>The status, quality, and expansion of the NIH full-length cDNA project: the Mammalian Gene Collection (MGC).</title>
        <authorList>
            <consortium name="The MGC Project Team"/>
        </authorList>
    </citation>
    <scope>NUCLEOTIDE SEQUENCE [LARGE SCALE MRNA]</scope>
    <source>
        <tissue>Eye</tissue>
    </source>
</reference>